<accession>Q5X1H9</accession>
<name>IHFA_LEGPA</name>
<protein>
    <recommendedName>
        <fullName evidence="1">Integration host factor subunit alpha</fullName>
        <shortName evidence="1">IHF-alpha</shortName>
    </recommendedName>
</protein>
<sequence length="97" mass="10987">MNALSKAIMAETLCDELKLNKPVAKEMVENFFEELRHALENGQHVKLSGFGNFTLRDKPQRPGRNPKTGEEIPVEARRVVTFKPGLKLKTKIEKIGK</sequence>
<proteinExistence type="inferred from homology"/>
<reference key="1">
    <citation type="journal article" date="2004" name="Nat. Genet.">
        <title>Evidence in the Legionella pneumophila genome for exploitation of host cell functions and high genome plasticity.</title>
        <authorList>
            <person name="Cazalet C."/>
            <person name="Rusniok C."/>
            <person name="Brueggemann H."/>
            <person name="Zidane N."/>
            <person name="Magnier A."/>
            <person name="Ma L."/>
            <person name="Tichit M."/>
            <person name="Jarraud S."/>
            <person name="Bouchier C."/>
            <person name="Vandenesch F."/>
            <person name="Kunst F."/>
            <person name="Etienne J."/>
            <person name="Glaser P."/>
            <person name="Buchrieser C."/>
        </authorList>
    </citation>
    <scope>NUCLEOTIDE SEQUENCE [LARGE SCALE GENOMIC DNA]</scope>
    <source>
        <strain>Paris</strain>
    </source>
</reference>
<feature type="chain" id="PRO_0000277738" description="Integration host factor subunit alpha">
    <location>
        <begin position="1"/>
        <end position="97"/>
    </location>
</feature>
<feature type="region of interest" description="Disordered" evidence="2">
    <location>
        <begin position="50"/>
        <end position="71"/>
    </location>
</feature>
<organism>
    <name type="scientific">Legionella pneumophila (strain Paris)</name>
    <dbReference type="NCBI Taxonomy" id="297246"/>
    <lineage>
        <taxon>Bacteria</taxon>
        <taxon>Pseudomonadati</taxon>
        <taxon>Pseudomonadota</taxon>
        <taxon>Gammaproteobacteria</taxon>
        <taxon>Legionellales</taxon>
        <taxon>Legionellaceae</taxon>
        <taxon>Legionella</taxon>
    </lineage>
</organism>
<comment type="function">
    <text evidence="1">This protein is one of the two subunits of integration host factor, a specific DNA-binding protein that functions in genetic recombination as well as in transcriptional and translational control.</text>
</comment>
<comment type="subunit">
    <text evidence="1">Heterodimer of an alpha and a beta chain.</text>
</comment>
<comment type="similarity">
    <text evidence="1">Belongs to the bacterial histone-like protein family.</text>
</comment>
<evidence type="ECO:0000255" key="1">
    <source>
        <dbReference type="HAMAP-Rule" id="MF_00380"/>
    </source>
</evidence>
<evidence type="ECO:0000256" key="2">
    <source>
        <dbReference type="SAM" id="MobiDB-lite"/>
    </source>
</evidence>
<gene>
    <name evidence="1" type="primary">ihfA</name>
    <name evidence="1" type="synonym">himA</name>
    <name type="ordered locus">lpp2764</name>
</gene>
<keyword id="KW-0233">DNA recombination</keyword>
<keyword id="KW-0238">DNA-binding</keyword>
<keyword id="KW-0804">Transcription</keyword>
<keyword id="KW-0805">Transcription regulation</keyword>
<keyword id="KW-0810">Translation regulation</keyword>
<dbReference type="EMBL" id="CR628336">
    <property type="protein sequence ID" value="CAH13917.1"/>
    <property type="molecule type" value="Genomic_DNA"/>
</dbReference>
<dbReference type="SMR" id="Q5X1H9"/>
<dbReference type="KEGG" id="lpp:lpp2764"/>
<dbReference type="LegioList" id="lpp2764"/>
<dbReference type="HOGENOM" id="CLU_105066_1_3_6"/>
<dbReference type="GO" id="GO:0005829">
    <property type="term" value="C:cytosol"/>
    <property type="evidence" value="ECO:0007669"/>
    <property type="project" value="TreeGrafter"/>
</dbReference>
<dbReference type="GO" id="GO:0003677">
    <property type="term" value="F:DNA binding"/>
    <property type="evidence" value="ECO:0007669"/>
    <property type="project" value="UniProtKB-UniRule"/>
</dbReference>
<dbReference type="GO" id="GO:0030527">
    <property type="term" value="F:structural constituent of chromatin"/>
    <property type="evidence" value="ECO:0007669"/>
    <property type="project" value="InterPro"/>
</dbReference>
<dbReference type="GO" id="GO:0006310">
    <property type="term" value="P:DNA recombination"/>
    <property type="evidence" value="ECO:0007669"/>
    <property type="project" value="UniProtKB-UniRule"/>
</dbReference>
<dbReference type="GO" id="GO:0009893">
    <property type="term" value="P:positive regulation of metabolic process"/>
    <property type="evidence" value="ECO:0007669"/>
    <property type="project" value="UniProtKB-ARBA"/>
</dbReference>
<dbReference type="GO" id="GO:0006355">
    <property type="term" value="P:regulation of DNA-templated transcription"/>
    <property type="evidence" value="ECO:0007669"/>
    <property type="project" value="UniProtKB-UniRule"/>
</dbReference>
<dbReference type="GO" id="GO:0006417">
    <property type="term" value="P:regulation of translation"/>
    <property type="evidence" value="ECO:0007669"/>
    <property type="project" value="UniProtKB-UniRule"/>
</dbReference>
<dbReference type="CDD" id="cd13835">
    <property type="entry name" value="IHF_A"/>
    <property type="match status" value="1"/>
</dbReference>
<dbReference type="FunFam" id="4.10.520.10:FF:000002">
    <property type="entry name" value="Integration host factor subunit alpha"/>
    <property type="match status" value="1"/>
</dbReference>
<dbReference type="Gene3D" id="4.10.520.10">
    <property type="entry name" value="IHF-like DNA-binding proteins"/>
    <property type="match status" value="1"/>
</dbReference>
<dbReference type="HAMAP" id="MF_00380">
    <property type="entry name" value="IHF_alpha"/>
    <property type="match status" value="1"/>
</dbReference>
<dbReference type="InterPro" id="IPR000119">
    <property type="entry name" value="Hist_DNA-bd"/>
</dbReference>
<dbReference type="InterPro" id="IPR020816">
    <property type="entry name" value="Histone-like_DNA-bd_CS"/>
</dbReference>
<dbReference type="InterPro" id="IPR010992">
    <property type="entry name" value="IHF-like_DNA-bd_dom_sf"/>
</dbReference>
<dbReference type="InterPro" id="IPR005684">
    <property type="entry name" value="IHF_alpha"/>
</dbReference>
<dbReference type="NCBIfam" id="TIGR00987">
    <property type="entry name" value="himA"/>
    <property type="match status" value="1"/>
</dbReference>
<dbReference type="NCBIfam" id="NF001401">
    <property type="entry name" value="PRK00285.1"/>
    <property type="match status" value="1"/>
</dbReference>
<dbReference type="PANTHER" id="PTHR33175">
    <property type="entry name" value="DNA-BINDING PROTEIN HU"/>
    <property type="match status" value="1"/>
</dbReference>
<dbReference type="PANTHER" id="PTHR33175:SF2">
    <property type="entry name" value="INTEGRATION HOST FACTOR SUBUNIT ALPHA"/>
    <property type="match status" value="1"/>
</dbReference>
<dbReference type="Pfam" id="PF00216">
    <property type="entry name" value="Bac_DNA_binding"/>
    <property type="match status" value="1"/>
</dbReference>
<dbReference type="PRINTS" id="PR01727">
    <property type="entry name" value="DNABINDINGHU"/>
</dbReference>
<dbReference type="SMART" id="SM00411">
    <property type="entry name" value="BHL"/>
    <property type="match status" value="1"/>
</dbReference>
<dbReference type="SUPFAM" id="SSF47729">
    <property type="entry name" value="IHF-like DNA-binding proteins"/>
    <property type="match status" value="1"/>
</dbReference>
<dbReference type="PROSITE" id="PS00045">
    <property type="entry name" value="HISTONE_LIKE"/>
    <property type="match status" value="1"/>
</dbReference>